<reference key="1">
    <citation type="journal article" date="2007" name="Nat. Biotechnol.">
        <title>Genome sequence of the lignocellulose-bioconverting and xylose-fermenting yeast Pichia stipitis.</title>
        <authorList>
            <person name="Jeffries T.W."/>
            <person name="Grigoriev I.V."/>
            <person name="Grimwood J."/>
            <person name="Laplaza J.M."/>
            <person name="Aerts A."/>
            <person name="Salamov A."/>
            <person name="Schmutz J."/>
            <person name="Lindquist E."/>
            <person name="Dehal P."/>
            <person name="Shapiro H."/>
            <person name="Jin Y.-S."/>
            <person name="Passoth V."/>
            <person name="Richardson P.M."/>
        </authorList>
    </citation>
    <scope>NUCLEOTIDE SEQUENCE [LARGE SCALE GENOMIC DNA]</scope>
    <source>
        <strain>ATCC 58785 / CBS 6054 / NBRC 10063 / NRRL Y-11545</strain>
    </source>
</reference>
<feature type="chain" id="PRO_0000292465" description="Protein FYV10">
    <location>
        <begin position="1"/>
        <end position="511"/>
    </location>
</feature>
<feature type="domain" description="CTLH" evidence="2">
    <location>
        <begin position="201"/>
        <end position="259"/>
    </location>
</feature>
<feature type="zinc finger region" description="RING-Gid-type" evidence="3">
    <location>
        <begin position="430"/>
        <end position="496"/>
    </location>
</feature>
<feature type="region of interest" description="Disordered" evidence="4">
    <location>
        <begin position="112"/>
        <end position="142"/>
    </location>
</feature>
<feature type="compositionally biased region" description="Polar residues" evidence="4">
    <location>
        <begin position="117"/>
        <end position="126"/>
    </location>
</feature>
<feature type="compositionally biased region" description="Basic and acidic residues" evidence="4">
    <location>
        <begin position="131"/>
        <end position="142"/>
    </location>
</feature>
<organism>
    <name type="scientific">Scheffersomyces stipitis (strain ATCC 58785 / CBS 6054 / NBRC 10063 / NRRL Y-11545)</name>
    <name type="common">Yeast</name>
    <name type="synonym">Pichia stipitis</name>
    <dbReference type="NCBI Taxonomy" id="322104"/>
    <lineage>
        <taxon>Eukaryota</taxon>
        <taxon>Fungi</taxon>
        <taxon>Dikarya</taxon>
        <taxon>Ascomycota</taxon>
        <taxon>Saccharomycotina</taxon>
        <taxon>Pichiomycetes</taxon>
        <taxon>Debaryomycetaceae</taxon>
        <taxon>Scheffersomyces</taxon>
    </lineage>
</organism>
<comment type="function">
    <text evidence="1">Involved in the proteasome-dependent degradation of fructose-1,6-bisphosphatase.</text>
</comment>
<comment type="subcellular location">
    <subcellularLocation>
        <location evidence="1">Cytoplasm</location>
    </subcellularLocation>
    <subcellularLocation>
        <location evidence="1">Nucleus</location>
    </subcellularLocation>
</comment>
<comment type="similarity">
    <text evidence="5">Belongs to the FYV10 family.</text>
</comment>
<gene>
    <name type="primary">FYV10</name>
    <name type="ORF">PICST_55076</name>
</gene>
<keyword id="KW-0963">Cytoplasm</keyword>
<keyword id="KW-0479">Metal-binding</keyword>
<keyword id="KW-0539">Nucleus</keyword>
<keyword id="KW-1185">Reference proteome</keyword>
<keyword id="KW-0862">Zinc</keyword>
<keyword id="KW-0863">Zinc-finger</keyword>
<protein>
    <recommendedName>
        <fullName>Protein FYV10</fullName>
    </recommendedName>
</protein>
<evidence type="ECO:0000250" key="1"/>
<evidence type="ECO:0000255" key="2">
    <source>
        <dbReference type="PROSITE-ProRule" id="PRU00058"/>
    </source>
</evidence>
<evidence type="ECO:0000255" key="3">
    <source>
        <dbReference type="PROSITE-ProRule" id="PRU01215"/>
    </source>
</evidence>
<evidence type="ECO:0000256" key="4">
    <source>
        <dbReference type="SAM" id="MobiDB-lite"/>
    </source>
</evidence>
<evidence type="ECO:0000305" key="5"/>
<accession>A3LPW2</accession>
<dbReference type="EMBL" id="CP000496">
    <property type="protein sequence ID" value="ABN64567.2"/>
    <property type="molecule type" value="Genomic_DNA"/>
</dbReference>
<dbReference type="RefSeq" id="XP_001382596.2">
    <property type="nucleotide sequence ID" value="XM_001382559.1"/>
</dbReference>
<dbReference type="SMR" id="A3LPW2"/>
<dbReference type="FunCoup" id="A3LPW2">
    <property type="interactions" value="926"/>
</dbReference>
<dbReference type="STRING" id="322104.A3LPW2"/>
<dbReference type="GeneID" id="4837192"/>
<dbReference type="KEGG" id="pic:PICST_55076"/>
<dbReference type="eggNOG" id="KOG0396">
    <property type="taxonomic scope" value="Eukaryota"/>
</dbReference>
<dbReference type="HOGENOM" id="CLU_027445_2_0_1"/>
<dbReference type="InParanoid" id="A3LPW2"/>
<dbReference type="OMA" id="IKLEMIR"/>
<dbReference type="OrthoDB" id="1933455at2759"/>
<dbReference type="Proteomes" id="UP000002258">
    <property type="component" value="Chromosome 2"/>
</dbReference>
<dbReference type="GO" id="GO:0005737">
    <property type="term" value="C:cytoplasm"/>
    <property type="evidence" value="ECO:0007669"/>
    <property type="project" value="UniProtKB-SubCell"/>
</dbReference>
<dbReference type="GO" id="GO:0034657">
    <property type="term" value="C:GID complex"/>
    <property type="evidence" value="ECO:0007669"/>
    <property type="project" value="TreeGrafter"/>
</dbReference>
<dbReference type="GO" id="GO:0005634">
    <property type="term" value="C:nucleus"/>
    <property type="evidence" value="ECO:0007669"/>
    <property type="project" value="UniProtKB-SubCell"/>
</dbReference>
<dbReference type="GO" id="GO:0061630">
    <property type="term" value="F:ubiquitin protein ligase activity"/>
    <property type="evidence" value="ECO:0007669"/>
    <property type="project" value="InterPro"/>
</dbReference>
<dbReference type="GO" id="GO:0008270">
    <property type="term" value="F:zinc ion binding"/>
    <property type="evidence" value="ECO:0007669"/>
    <property type="project" value="UniProtKB-KW"/>
</dbReference>
<dbReference type="GO" id="GO:0045721">
    <property type="term" value="P:negative regulation of gluconeogenesis"/>
    <property type="evidence" value="ECO:0007669"/>
    <property type="project" value="UniProtKB-ARBA"/>
</dbReference>
<dbReference type="GO" id="GO:0043161">
    <property type="term" value="P:proteasome-mediated ubiquitin-dependent protein catabolic process"/>
    <property type="evidence" value="ECO:0007669"/>
    <property type="project" value="InterPro"/>
</dbReference>
<dbReference type="InterPro" id="IPR013144">
    <property type="entry name" value="CRA_dom"/>
</dbReference>
<dbReference type="InterPro" id="IPR024964">
    <property type="entry name" value="CTLH/CRA"/>
</dbReference>
<dbReference type="InterPro" id="IPR006595">
    <property type="entry name" value="CTLH_C"/>
</dbReference>
<dbReference type="InterPro" id="IPR045098">
    <property type="entry name" value="Fyv10_fam"/>
</dbReference>
<dbReference type="InterPro" id="IPR044063">
    <property type="entry name" value="ZF_RING_GID"/>
</dbReference>
<dbReference type="PANTHER" id="PTHR12170:SF2">
    <property type="entry name" value="E3 UBIQUITIN-PROTEIN TRANSFERASE MAEA"/>
    <property type="match status" value="1"/>
</dbReference>
<dbReference type="PANTHER" id="PTHR12170">
    <property type="entry name" value="MACROPHAGE ERYTHROBLAST ATTACHER-RELATED"/>
    <property type="match status" value="1"/>
</dbReference>
<dbReference type="Pfam" id="PF10607">
    <property type="entry name" value="CTLH"/>
    <property type="match status" value="1"/>
</dbReference>
<dbReference type="SMART" id="SM00757">
    <property type="entry name" value="CRA"/>
    <property type="match status" value="1"/>
</dbReference>
<dbReference type="PROSITE" id="PS50897">
    <property type="entry name" value="CTLH"/>
    <property type="match status" value="1"/>
</dbReference>
<dbReference type="PROSITE" id="PS51867">
    <property type="entry name" value="ZF_RING_GID"/>
    <property type="match status" value="1"/>
</dbReference>
<sequence>MSEPSLNFHIQSHSTQFRIPTELIKKNFKTIQKLVEKQKKQMTDDVAKIKKNPNIPTAMKLAMVRKSIKSFEGFQKKLQASIAKDEELRSRLIARIEHLALISEYCITQDKTKTQVEKPSQPQSQNEDTEEKEHSTKDDNDKYLDLHNPNLITWYRDQTNLLIIDYLIKSNTRTDHNIGLLLLKSLSESNPKYMKLIDYDLFESFNKVYVSIMEDHDLTLVIAWFNENRNFLKKANSNLEFEINYCRFLSLIEKGDVNEAIKFSSINLSPYGNVSNYQDTDRANHEHNLNRLKEIGGLLVYMAINEEKRTRNDKIAFSSNLLINSPRFHEYEKLLSDERWDSLSMCFVENFTKLYGISKNYPIFIYLSAGLASLKTKSCYHNTENTIFRENQEINVTDESIYKKDLTVLTDKKYRGSNQYYKLLNKINNCPVCSPELYKLSRNLPYAQLITSIFNNPFKLPNGNIYPFDKLLNPSEKYLSEKNTLLRMGKIKDPLTREIFLIDTCIRVYPA</sequence>
<proteinExistence type="inferred from homology"/>
<name>FYV10_PICST</name>